<protein>
    <recommendedName>
        <fullName evidence="1">Small ribosomal subunit protein bS20</fullName>
    </recommendedName>
    <alternativeName>
        <fullName evidence="3">30S ribosomal protein S20</fullName>
    </alternativeName>
</protein>
<proteinExistence type="inferred from homology"/>
<evidence type="ECO:0000255" key="1">
    <source>
        <dbReference type="HAMAP-Rule" id="MF_00500"/>
    </source>
</evidence>
<evidence type="ECO:0000256" key="2">
    <source>
        <dbReference type="SAM" id="MobiDB-lite"/>
    </source>
</evidence>
<evidence type="ECO:0000305" key="3"/>
<organism>
    <name type="scientific">Streptococcus pyogenes serotype M18 (strain MGAS8232)</name>
    <dbReference type="NCBI Taxonomy" id="186103"/>
    <lineage>
        <taxon>Bacteria</taxon>
        <taxon>Bacillati</taxon>
        <taxon>Bacillota</taxon>
        <taxon>Bacilli</taxon>
        <taxon>Lactobacillales</taxon>
        <taxon>Streptococcaceae</taxon>
        <taxon>Streptococcus</taxon>
    </lineage>
</organism>
<reference key="1">
    <citation type="journal article" date="2002" name="Proc. Natl. Acad. Sci. U.S.A.">
        <title>Genome sequence and comparative microarray analysis of serotype M18 group A Streptococcus strains associated with acute rheumatic fever outbreaks.</title>
        <authorList>
            <person name="Smoot J.C."/>
            <person name="Barbian K.D."/>
            <person name="Van Gompel J.J."/>
            <person name="Smoot L.M."/>
            <person name="Chaussee M.S."/>
            <person name="Sylva G.L."/>
            <person name="Sturdevant D.E."/>
            <person name="Ricklefs S.M."/>
            <person name="Porcella S.F."/>
            <person name="Parkins L.D."/>
            <person name="Beres S.B."/>
            <person name="Campbell D.S."/>
            <person name="Smith T.M."/>
            <person name="Zhang Q."/>
            <person name="Kapur V."/>
            <person name="Daly J.A."/>
            <person name="Veasy L.G."/>
            <person name="Musser J.M."/>
        </authorList>
    </citation>
    <scope>NUCLEOTIDE SEQUENCE [LARGE SCALE GENOMIC DNA]</scope>
    <source>
        <strain>MGAS8232</strain>
    </source>
</reference>
<comment type="function">
    <text evidence="1">Binds directly to 16S ribosomal RNA.</text>
</comment>
<comment type="similarity">
    <text evidence="1">Belongs to the bacterial ribosomal protein bS20 family.</text>
</comment>
<keyword id="KW-0687">Ribonucleoprotein</keyword>
<keyword id="KW-0689">Ribosomal protein</keyword>
<keyword id="KW-0694">RNA-binding</keyword>
<keyword id="KW-0699">rRNA-binding</keyword>
<feature type="chain" id="PRO_0000168040" description="Small ribosomal subunit protein bS20">
    <location>
        <begin position="1"/>
        <end position="77"/>
    </location>
</feature>
<feature type="region of interest" description="Disordered" evidence="2">
    <location>
        <begin position="47"/>
        <end position="77"/>
    </location>
</feature>
<accession>P66511</accession>
<accession>Q99ZH0</accession>
<gene>
    <name evidence="1" type="primary">rpsT</name>
    <name evidence="1" type="synonym">rps20</name>
    <name type="ordered locus">spyM18_1184</name>
</gene>
<name>RS20_STRP8</name>
<dbReference type="EMBL" id="AE009949">
    <property type="protein sequence ID" value="AAL97800.1"/>
    <property type="molecule type" value="Genomic_DNA"/>
</dbReference>
<dbReference type="SMR" id="P66511"/>
<dbReference type="KEGG" id="spm:spyM18_1184"/>
<dbReference type="HOGENOM" id="CLU_160655_1_1_9"/>
<dbReference type="GO" id="GO:0005829">
    <property type="term" value="C:cytosol"/>
    <property type="evidence" value="ECO:0007669"/>
    <property type="project" value="TreeGrafter"/>
</dbReference>
<dbReference type="GO" id="GO:0015935">
    <property type="term" value="C:small ribosomal subunit"/>
    <property type="evidence" value="ECO:0007669"/>
    <property type="project" value="TreeGrafter"/>
</dbReference>
<dbReference type="GO" id="GO:0070181">
    <property type="term" value="F:small ribosomal subunit rRNA binding"/>
    <property type="evidence" value="ECO:0007669"/>
    <property type="project" value="TreeGrafter"/>
</dbReference>
<dbReference type="GO" id="GO:0003735">
    <property type="term" value="F:structural constituent of ribosome"/>
    <property type="evidence" value="ECO:0007669"/>
    <property type="project" value="InterPro"/>
</dbReference>
<dbReference type="GO" id="GO:0006412">
    <property type="term" value="P:translation"/>
    <property type="evidence" value="ECO:0007669"/>
    <property type="project" value="UniProtKB-UniRule"/>
</dbReference>
<dbReference type="FunFam" id="1.20.58.110:FF:000001">
    <property type="entry name" value="30S ribosomal protein S20"/>
    <property type="match status" value="1"/>
</dbReference>
<dbReference type="Gene3D" id="1.20.58.110">
    <property type="entry name" value="Ribosomal protein S20"/>
    <property type="match status" value="1"/>
</dbReference>
<dbReference type="HAMAP" id="MF_00500">
    <property type="entry name" value="Ribosomal_bS20"/>
    <property type="match status" value="1"/>
</dbReference>
<dbReference type="InterPro" id="IPR002583">
    <property type="entry name" value="Ribosomal_bS20"/>
</dbReference>
<dbReference type="InterPro" id="IPR036510">
    <property type="entry name" value="Ribosomal_bS20_sf"/>
</dbReference>
<dbReference type="NCBIfam" id="TIGR00029">
    <property type="entry name" value="S20"/>
    <property type="match status" value="1"/>
</dbReference>
<dbReference type="PANTHER" id="PTHR33398">
    <property type="entry name" value="30S RIBOSOMAL PROTEIN S20"/>
    <property type="match status" value="1"/>
</dbReference>
<dbReference type="PANTHER" id="PTHR33398:SF1">
    <property type="entry name" value="SMALL RIBOSOMAL SUBUNIT PROTEIN BS20C"/>
    <property type="match status" value="1"/>
</dbReference>
<dbReference type="Pfam" id="PF01649">
    <property type="entry name" value="Ribosomal_S20p"/>
    <property type="match status" value="1"/>
</dbReference>
<dbReference type="SUPFAM" id="SSF46992">
    <property type="entry name" value="Ribosomal protein S20"/>
    <property type="match status" value="1"/>
</dbReference>
<sequence>MANIKSAIKRAELNVKANEKNSAQKSAMRTAIKAFEANPSEELFRAASSSIDKAESKGLIHKNKASRDKARLAAKLG</sequence>